<reference key="1">
    <citation type="journal article" date="1997" name="Nature">
        <title>The complete genome sequence of the gastric pathogen Helicobacter pylori.</title>
        <authorList>
            <person name="Tomb J.-F."/>
            <person name="White O."/>
            <person name="Kerlavage A.R."/>
            <person name="Clayton R.A."/>
            <person name="Sutton G.G."/>
            <person name="Fleischmann R.D."/>
            <person name="Ketchum K.A."/>
            <person name="Klenk H.-P."/>
            <person name="Gill S.R."/>
            <person name="Dougherty B.A."/>
            <person name="Nelson K.E."/>
            <person name="Quackenbush J."/>
            <person name="Zhou L."/>
            <person name="Kirkness E.F."/>
            <person name="Peterson S.N."/>
            <person name="Loftus B.J."/>
            <person name="Richardson D.L."/>
            <person name="Dodson R.J."/>
            <person name="Khalak H.G."/>
            <person name="Glodek A."/>
            <person name="McKenney K."/>
            <person name="FitzGerald L.M."/>
            <person name="Lee N."/>
            <person name="Adams M.D."/>
            <person name="Hickey E.K."/>
            <person name="Berg D.E."/>
            <person name="Gocayne J.D."/>
            <person name="Utterback T.R."/>
            <person name="Peterson J.D."/>
            <person name="Kelley J.M."/>
            <person name="Cotton M.D."/>
            <person name="Weidman J.F."/>
            <person name="Fujii C."/>
            <person name="Bowman C."/>
            <person name="Watthey L."/>
            <person name="Wallin E."/>
            <person name="Hayes W.S."/>
            <person name="Borodovsky M."/>
            <person name="Karp P.D."/>
            <person name="Smith H.O."/>
            <person name="Fraser C.M."/>
            <person name="Venter J.C."/>
        </authorList>
    </citation>
    <scope>NUCLEOTIDE SEQUENCE [LARGE SCALE GENOMIC DNA]</scope>
    <source>
        <strain>ATCC 700392 / 26695</strain>
    </source>
</reference>
<keyword id="KW-0119">Carbohydrate metabolism</keyword>
<keyword id="KW-0413">Isomerase</keyword>
<keyword id="KW-0479">Metal-binding</keyword>
<keyword id="KW-1185">Reference proteome</keyword>
<dbReference type="EC" id="5.1.3.1" evidence="1"/>
<dbReference type="EMBL" id="AE000511">
    <property type="protein sequence ID" value="AAD08425.1"/>
    <property type="molecule type" value="Genomic_DNA"/>
</dbReference>
<dbReference type="PIR" id="B64693">
    <property type="entry name" value="B64693"/>
</dbReference>
<dbReference type="RefSeq" id="NP_208177.1">
    <property type="nucleotide sequence ID" value="NC_000915.1"/>
</dbReference>
<dbReference type="RefSeq" id="WP_000861474.1">
    <property type="nucleotide sequence ID" value="NC_018939.1"/>
</dbReference>
<dbReference type="SMR" id="P56188"/>
<dbReference type="FunCoup" id="P56188">
    <property type="interactions" value="364"/>
</dbReference>
<dbReference type="IntAct" id="P56188">
    <property type="interactions" value="1"/>
</dbReference>
<dbReference type="STRING" id="85962.HP_1386"/>
<dbReference type="PaxDb" id="85962-C694_07155"/>
<dbReference type="EnsemblBacteria" id="AAD08425">
    <property type="protein sequence ID" value="AAD08425"/>
    <property type="gene ID" value="HP_1386"/>
</dbReference>
<dbReference type="KEGG" id="heo:C694_07155"/>
<dbReference type="KEGG" id="hpy:HP_1386"/>
<dbReference type="PATRIC" id="fig|85962.47.peg.1484"/>
<dbReference type="eggNOG" id="COG0036">
    <property type="taxonomic scope" value="Bacteria"/>
</dbReference>
<dbReference type="InParanoid" id="P56188"/>
<dbReference type="OrthoDB" id="1645589at2"/>
<dbReference type="PhylomeDB" id="P56188"/>
<dbReference type="Proteomes" id="UP000000429">
    <property type="component" value="Chromosome"/>
</dbReference>
<dbReference type="GO" id="GO:0005829">
    <property type="term" value="C:cytosol"/>
    <property type="evidence" value="ECO:0000318"/>
    <property type="project" value="GO_Central"/>
</dbReference>
<dbReference type="GO" id="GO:0004750">
    <property type="term" value="F:D-ribulose-phosphate 3-epimerase activity"/>
    <property type="evidence" value="ECO:0000318"/>
    <property type="project" value="GO_Central"/>
</dbReference>
<dbReference type="GO" id="GO:0046872">
    <property type="term" value="F:metal ion binding"/>
    <property type="evidence" value="ECO:0000318"/>
    <property type="project" value="GO_Central"/>
</dbReference>
<dbReference type="GO" id="GO:0005975">
    <property type="term" value="P:carbohydrate metabolic process"/>
    <property type="evidence" value="ECO:0000318"/>
    <property type="project" value="GO_Central"/>
</dbReference>
<dbReference type="GO" id="GO:0019323">
    <property type="term" value="P:pentose catabolic process"/>
    <property type="evidence" value="ECO:0007669"/>
    <property type="project" value="UniProtKB-UniRule"/>
</dbReference>
<dbReference type="GO" id="GO:0009052">
    <property type="term" value="P:pentose-phosphate shunt, non-oxidative branch"/>
    <property type="evidence" value="ECO:0000318"/>
    <property type="project" value="GO_Central"/>
</dbReference>
<dbReference type="CDD" id="cd00429">
    <property type="entry name" value="RPE"/>
    <property type="match status" value="1"/>
</dbReference>
<dbReference type="FunFam" id="3.20.20.70:FF:000004">
    <property type="entry name" value="Ribulose-phosphate 3-epimerase"/>
    <property type="match status" value="1"/>
</dbReference>
<dbReference type="Gene3D" id="3.20.20.70">
    <property type="entry name" value="Aldolase class I"/>
    <property type="match status" value="1"/>
</dbReference>
<dbReference type="HAMAP" id="MF_02227">
    <property type="entry name" value="RPE"/>
    <property type="match status" value="1"/>
</dbReference>
<dbReference type="InterPro" id="IPR013785">
    <property type="entry name" value="Aldolase_TIM"/>
</dbReference>
<dbReference type="InterPro" id="IPR026019">
    <property type="entry name" value="Ribul_P_3_epim"/>
</dbReference>
<dbReference type="InterPro" id="IPR000056">
    <property type="entry name" value="Ribul_P_3_epim-like"/>
</dbReference>
<dbReference type="InterPro" id="IPR011060">
    <property type="entry name" value="RibuloseP-bd_barrel"/>
</dbReference>
<dbReference type="NCBIfam" id="NF004076">
    <property type="entry name" value="PRK05581.1-4"/>
    <property type="match status" value="1"/>
</dbReference>
<dbReference type="NCBIfam" id="TIGR01163">
    <property type="entry name" value="rpe"/>
    <property type="match status" value="1"/>
</dbReference>
<dbReference type="PANTHER" id="PTHR11749">
    <property type="entry name" value="RIBULOSE-5-PHOSPHATE-3-EPIMERASE"/>
    <property type="match status" value="1"/>
</dbReference>
<dbReference type="Pfam" id="PF00834">
    <property type="entry name" value="Ribul_P_3_epim"/>
    <property type="match status" value="1"/>
</dbReference>
<dbReference type="PIRSF" id="PIRSF001461">
    <property type="entry name" value="RPE"/>
    <property type="match status" value="1"/>
</dbReference>
<dbReference type="SUPFAM" id="SSF51366">
    <property type="entry name" value="Ribulose-phoshate binding barrel"/>
    <property type="match status" value="1"/>
</dbReference>
<dbReference type="PROSITE" id="PS01085">
    <property type="entry name" value="RIBUL_P_3_EPIMER_1"/>
    <property type="match status" value="1"/>
</dbReference>
<dbReference type="PROSITE" id="PS01086">
    <property type="entry name" value="RIBUL_P_3_EPIMER_2"/>
    <property type="match status" value="1"/>
</dbReference>
<evidence type="ECO:0000255" key="1">
    <source>
        <dbReference type="HAMAP-Rule" id="MF_02227"/>
    </source>
</evidence>
<proteinExistence type="inferred from homology"/>
<name>RPE_HELPY</name>
<sequence length="217" mass="24045">MKVAPSLLSADFMHLAKEIESVSNADFLHVDVMDGHYVPNLTMGPVVLENVTQMSQVPLDVHLMVENASFFAELFAPLKPQIISIHAENEKHPHRVLQLIKNLGITPGIVLNPHTHEESIKYLLESVGLVLLMSVNPGFGGQKFLDLVLEKCLKVKELIKRYNPSCLLEVDGGVNDKNIFELQQAGVDVVVSGSYIFKSKDRKLAIEGLQNVRQSLA</sequence>
<feature type="chain" id="PRO_0000171572" description="Ribulose-phosphate 3-epimerase">
    <location>
        <begin position="1"/>
        <end position="217"/>
    </location>
</feature>
<feature type="active site" description="Proton acceptor" evidence="1">
    <location>
        <position position="31"/>
    </location>
</feature>
<feature type="active site" description="Proton donor" evidence="1">
    <location>
        <position position="171"/>
    </location>
</feature>
<feature type="binding site" evidence="1">
    <location>
        <position position="6"/>
    </location>
    <ligand>
        <name>substrate</name>
    </ligand>
</feature>
<feature type="binding site" evidence="1">
    <location>
        <position position="29"/>
    </location>
    <ligand>
        <name>a divalent metal cation</name>
        <dbReference type="ChEBI" id="CHEBI:60240"/>
    </ligand>
</feature>
<feature type="binding site" evidence="1">
    <location>
        <position position="31"/>
    </location>
    <ligand>
        <name>a divalent metal cation</name>
        <dbReference type="ChEBI" id="CHEBI:60240"/>
    </ligand>
</feature>
<feature type="binding site" evidence="1">
    <location>
        <position position="62"/>
    </location>
    <ligand>
        <name>a divalent metal cation</name>
        <dbReference type="ChEBI" id="CHEBI:60240"/>
    </ligand>
</feature>
<feature type="binding site" evidence="1">
    <location>
        <position position="62"/>
    </location>
    <ligand>
        <name>substrate</name>
    </ligand>
</feature>
<feature type="binding site" evidence="1">
    <location>
        <begin position="138"/>
        <end position="141"/>
    </location>
    <ligand>
        <name>substrate</name>
    </ligand>
</feature>
<feature type="binding site" evidence="1">
    <location>
        <begin position="171"/>
        <end position="173"/>
    </location>
    <ligand>
        <name>substrate</name>
    </ligand>
</feature>
<feature type="binding site" evidence="1">
    <location>
        <position position="171"/>
    </location>
    <ligand>
        <name>a divalent metal cation</name>
        <dbReference type="ChEBI" id="CHEBI:60240"/>
    </ligand>
</feature>
<feature type="binding site" evidence="1">
    <location>
        <begin position="193"/>
        <end position="194"/>
    </location>
    <ligand>
        <name>substrate</name>
    </ligand>
</feature>
<organism>
    <name type="scientific">Helicobacter pylori (strain ATCC 700392 / 26695)</name>
    <name type="common">Campylobacter pylori</name>
    <dbReference type="NCBI Taxonomy" id="85962"/>
    <lineage>
        <taxon>Bacteria</taxon>
        <taxon>Pseudomonadati</taxon>
        <taxon>Campylobacterota</taxon>
        <taxon>Epsilonproteobacteria</taxon>
        <taxon>Campylobacterales</taxon>
        <taxon>Helicobacteraceae</taxon>
        <taxon>Helicobacter</taxon>
    </lineage>
</organism>
<accession>P56188</accession>
<comment type="function">
    <text evidence="1">Catalyzes the reversible epimerization of D-ribulose 5-phosphate to D-xylulose 5-phosphate.</text>
</comment>
<comment type="catalytic activity">
    <reaction evidence="1">
        <text>D-ribulose 5-phosphate = D-xylulose 5-phosphate</text>
        <dbReference type="Rhea" id="RHEA:13677"/>
        <dbReference type="ChEBI" id="CHEBI:57737"/>
        <dbReference type="ChEBI" id="CHEBI:58121"/>
        <dbReference type="EC" id="5.1.3.1"/>
    </reaction>
</comment>
<comment type="cofactor">
    <cofactor evidence="1">
        <name>a divalent metal cation</name>
        <dbReference type="ChEBI" id="CHEBI:60240"/>
    </cofactor>
    <text evidence="1">Binds 1 divalent metal cation per subunit.</text>
</comment>
<comment type="pathway">
    <text evidence="1">Carbohydrate degradation.</text>
</comment>
<comment type="similarity">
    <text evidence="1">Belongs to the ribulose-phosphate 3-epimerase family.</text>
</comment>
<protein>
    <recommendedName>
        <fullName evidence="1">Ribulose-phosphate 3-epimerase</fullName>
        <ecNumber evidence="1">5.1.3.1</ecNumber>
    </recommendedName>
</protein>
<gene>
    <name evidence="1" type="primary">rpe</name>
    <name type="ordered locus">HP_1386</name>
</gene>